<organism>
    <name type="scientific">Populus trichocarpa</name>
    <name type="common">Western balsam poplar</name>
    <name type="synonym">Populus balsamifera subsp. trichocarpa</name>
    <dbReference type="NCBI Taxonomy" id="3694"/>
    <lineage>
        <taxon>Eukaryota</taxon>
        <taxon>Viridiplantae</taxon>
        <taxon>Streptophyta</taxon>
        <taxon>Embryophyta</taxon>
        <taxon>Tracheophyta</taxon>
        <taxon>Spermatophyta</taxon>
        <taxon>Magnoliopsida</taxon>
        <taxon>eudicotyledons</taxon>
        <taxon>Gunneridae</taxon>
        <taxon>Pentapetalae</taxon>
        <taxon>rosids</taxon>
        <taxon>fabids</taxon>
        <taxon>Malpighiales</taxon>
        <taxon>Salicaceae</taxon>
        <taxon>Saliceae</taxon>
        <taxon>Populus</taxon>
    </lineage>
</organism>
<proteinExistence type="inferred from homology"/>
<protein>
    <recommendedName>
        <fullName evidence="1">NAD(P)H-quinone oxidoreductase subunit I, chloroplastic</fullName>
        <ecNumber evidence="1">7.1.1.-</ecNumber>
    </recommendedName>
    <alternativeName>
        <fullName evidence="1">NAD(P)H dehydrogenase subunit I</fullName>
        <shortName evidence="1">NDH subunit I</shortName>
    </alternativeName>
    <alternativeName>
        <fullName evidence="1">NADH-plastoquinone oxidoreductase subunit I</fullName>
    </alternativeName>
</protein>
<gene>
    <name evidence="1" type="primary">ndhI</name>
    <name type="ordered locus">Poptr_cp083</name>
</gene>
<feature type="chain" id="PRO_0000298586" description="NAD(P)H-quinone oxidoreductase subunit I, chloroplastic">
    <location>
        <begin position="1"/>
        <end position="176"/>
    </location>
</feature>
<feature type="domain" description="4Fe-4S ferredoxin-type 1" evidence="1">
    <location>
        <begin position="55"/>
        <end position="84"/>
    </location>
</feature>
<feature type="domain" description="4Fe-4S ferredoxin-type 2" evidence="1">
    <location>
        <begin position="95"/>
        <end position="124"/>
    </location>
</feature>
<feature type="binding site" evidence="1">
    <location>
        <position position="64"/>
    </location>
    <ligand>
        <name>[4Fe-4S] cluster</name>
        <dbReference type="ChEBI" id="CHEBI:49883"/>
        <label>1</label>
    </ligand>
</feature>
<feature type="binding site" evidence="1">
    <location>
        <position position="67"/>
    </location>
    <ligand>
        <name>[4Fe-4S] cluster</name>
        <dbReference type="ChEBI" id="CHEBI:49883"/>
        <label>1</label>
    </ligand>
</feature>
<feature type="binding site" evidence="1">
    <location>
        <position position="70"/>
    </location>
    <ligand>
        <name>[4Fe-4S] cluster</name>
        <dbReference type="ChEBI" id="CHEBI:49883"/>
        <label>1</label>
    </ligand>
</feature>
<feature type="binding site" evidence="1">
    <location>
        <position position="74"/>
    </location>
    <ligand>
        <name>[4Fe-4S] cluster</name>
        <dbReference type="ChEBI" id="CHEBI:49883"/>
        <label>2</label>
    </ligand>
</feature>
<feature type="binding site" evidence="1">
    <location>
        <position position="104"/>
    </location>
    <ligand>
        <name>[4Fe-4S] cluster</name>
        <dbReference type="ChEBI" id="CHEBI:49883"/>
        <label>2</label>
    </ligand>
</feature>
<feature type="binding site" evidence="1">
    <location>
        <position position="107"/>
    </location>
    <ligand>
        <name>[4Fe-4S] cluster</name>
        <dbReference type="ChEBI" id="CHEBI:49883"/>
        <label>2</label>
    </ligand>
</feature>
<feature type="binding site" evidence="1">
    <location>
        <position position="110"/>
    </location>
    <ligand>
        <name>[4Fe-4S] cluster</name>
        <dbReference type="ChEBI" id="CHEBI:49883"/>
        <label>2</label>
    </ligand>
</feature>
<feature type="binding site" evidence="1">
    <location>
        <position position="114"/>
    </location>
    <ligand>
        <name>[4Fe-4S] cluster</name>
        <dbReference type="ChEBI" id="CHEBI:49883"/>
        <label>1</label>
    </ligand>
</feature>
<keyword id="KW-0004">4Fe-4S</keyword>
<keyword id="KW-0150">Chloroplast</keyword>
<keyword id="KW-0408">Iron</keyword>
<keyword id="KW-0411">Iron-sulfur</keyword>
<keyword id="KW-0472">Membrane</keyword>
<keyword id="KW-0479">Metal-binding</keyword>
<keyword id="KW-0520">NAD</keyword>
<keyword id="KW-0521">NADP</keyword>
<keyword id="KW-0934">Plastid</keyword>
<keyword id="KW-0618">Plastoquinone</keyword>
<keyword id="KW-0874">Quinone</keyword>
<keyword id="KW-1185">Reference proteome</keyword>
<keyword id="KW-0677">Repeat</keyword>
<keyword id="KW-0793">Thylakoid</keyword>
<keyword id="KW-1278">Translocase</keyword>
<geneLocation type="chloroplast"/>
<reference key="1">
    <citation type="journal article" date="2006" name="Science">
        <title>The genome of black cottonwood, Populus trichocarpa (Torr. &amp; Gray).</title>
        <authorList>
            <person name="Tuskan G.A."/>
            <person name="Difazio S."/>
            <person name="Jansson S."/>
            <person name="Bohlmann J."/>
            <person name="Grigoriev I."/>
            <person name="Hellsten U."/>
            <person name="Putnam N."/>
            <person name="Ralph S."/>
            <person name="Rombauts S."/>
            <person name="Salamov A."/>
            <person name="Schein J."/>
            <person name="Sterck L."/>
            <person name="Aerts A."/>
            <person name="Bhalerao R.R."/>
            <person name="Bhalerao R.P."/>
            <person name="Blaudez D."/>
            <person name="Boerjan W."/>
            <person name="Brun A."/>
            <person name="Brunner A."/>
            <person name="Busov V."/>
            <person name="Campbell M."/>
            <person name="Carlson J."/>
            <person name="Chalot M."/>
            <person name="Chapman J."/>
            <person name="Chen G.-L."/>
            <person name="Cooper D."/>
            <person name="Coutinho P.M."/>
            <person name="Couturier J."/>
            <person name="Covert S."/>
            <person name="Cronk Q."/>
            <person name="Cunningham R."/>
            <person name="Davis J."/>
            <person name="Degroeve S."/>
            <person name="Dejardin A."/>
            <person name="dePamphilis C.W."/>
            <person name="Detter J."/>
            <person name="Dirks B."/>
            <person name="Dubchak I."/>
            <person name="Duplessis S."/>
            <person name="Ehlting J."/>
            <person name="Ellis B."/>
            <person name="Gendler K."/>
            <person name="Goodstein D."/>
            <person name="Gribskov M."/>
            <person name="Grimwood J."/>
            <person name="Groover A."/>
            <person name="Gunter L."/>
            <person name="Hamberger B."/>
            <person name="Heinze B."/>
            <person name="Helariutta Y."/>
            <person name="Henrissat B."/>
            <person name="Holligan D."/>
            <person name="Holt R."/>
            <person name="Huang W."/>
            <person name="Islam-Faridi N."/>
            <person name="Jones S."/>
            <person name="Jones-Rhoades M."/>
            <person name="Jorgensen R."/>
            <person name="Joshi C."/>
            <person name="Kangasjaervi J."/>
            <person name="Karlsson J."/>
            <person name="Kelleher C."/>
            <person name="Kirkpatrick R."/>
            <person name="Kirst M."/>
            <person name="Kohler A."/>
            <person name="Kalluri U."/>
            <person name="Larimer F."/>
            <person name="Leebens-Mack J."/>
            <person name="Leple J.-C."/>
            <person name="Locascio P."/>
            <person name="Lou Y."/>
            <person name="Lucas S."/>
            <person name="Martin F."/>
            <person name="Montanini B."/>
            <person name="Napoli C."/>
            <person name="Nelson D.R."/>
            <person name="Nelson C."/>
            <person name="Nieminen K."/>
            <person name="Nilsson O."/>
            <person name="Pereda V."/>
            <person name="Peter G."/>
            <person name="Philippe R."/>
            <person name="Pilate G."/>
            <person name="Poliakov A."/>
            <person name="Razumovskaya J."/>
            <person name="Richardson P."/>
            <person name="Rinaldi C."/>
            <person name="Ritland K."/>
            <person name="Rouze P."/>
            <person name="Ryaboy D."/>
            <person name="Schmutz J."/>
            <person name="Schrader J."/>
            <person name="Segerman B."/>
            <person name="Shin H."/>
            <person name="Siddiqui A."/>
            <person name="Sterky F."/>
            <person name="Terry A."/>
            <person name="Tsai C.-J."/>
            <person name="Uberbacher E."/>
            <person name="Unneberg P."/>
            <person name="Vahala J."/>
            <person name="Wall K."/>
            <person name="Wessler S."/>
            <person name="Yang G."/>
            <person name="Yin T."/>
            <person name="Douglas C."/>
            <person name="Marra M."/>
            <person name="Sandberg G."/>
            <person name="Van de Peer Y."/>
            <person name="Rokhsar D.S."/>
        </authorList>
    </citation>
    <scope>NUCLEOTIDE SEQUENCE [LARGE SCALE GENOMIC DNA]</scope>
    <source>
        <strain>cv. Nisqually</strain>
    </source>
</reference>
<comment type="function">
    <text evidence="1">NDH shuttles electrons from NAD(P)H:plastoquinone, via FMN and iron-sulfur (Fe-S) centers, to quinones in the photosynthetic chain and possibly in a chloroplast respiratory chain. The immediate electron acceptor for the enzyme in this species is believed to be plastoquinone. Couples the redox reaction to proton translocation, and thus conserves the redox energy in a proton gradient.</text>
</comment>
<comment type="catalytic activity">
    <reaction evidence="1">
        <text>a plastoquinone + NADH + (n+1) H(+)(in) = a plastoquinol + NAD(+) + n H(+)(out)</text>
        <dbReference type="Rhea" id="RHEA:42608"/>
        <dbReference type="Rhea" id="RHEA-COMP:9561"/>
        <dbReference type="Rhea" id="RHEA-COMP:9562"/>
        <dbReference type="ChEBI" id="CHEBI:15378"/>
        <dbReference type="ChEBI" id="CHEBI:17757"/>
        <dbReference type="ChEBI" id="CHEBI:57540"/>
        <dbReference type="ChEBI" id="CHEBI:57945"/>
        <dbReference type="ChEBI" id="CHEBI:62192"/>
    </reaction>
</comment>
<comment type="catalytic activity">
    <reaction evidence="1">
        <text>a plastoquinone + NADPH + (n+1) H(+)(in) = a plastoquinol + NADP(+) + n H(+)(out)</text>
        <dbReference type="Rhea" id="RHEA:42612"/>
        <dbReference type="Rhea" id="RHEA-COMP:9561"/>
        <dbReference type="Rhea" id="RHEA-COMP:9562"/>
        <dbReference type="ChEBI" id="CHEBI:15378"/>
        <dbReference type="ChEBI" id="CHEBI:17757"/>
        <dbReference type="ChEBI" id="CHEBI:57783"/>
        <dbReference type="ChEBI" id="CHEBI:58349"/>
        <dbReference type="ChEBI" id="CHEBI:62192"/>
    </reaction>
</comment>
<comment type="cofactor">
    <cofactor evidence="1">
        <name>[4Fe-4S] cluster</name>
        <dbReference type="ChEBI" id="CHEBI:49883"/>
    </cofactor>
    <text evidence="1">Binds 2 [4Fe-4S] clusters per subunit.</text>
</comment>
<comment type="subunit">
    <text evidence="1">NDH is composed of at least 16 different subunits, 5 of which are encoded in the nucleus.</text>
</comment>
<comment type="subcellular location">
    <subcellularLocation>
        <location evidence="1">Plastid</location>
        <location evidence="1">Chloroplast thylakoid membrane</location>
        <topology evidence="1">Peripheral membrane protein</topology>
    </subcellularLocation>
</comment>
<comment type="similarity">
    <text evidence="1">Belongs to the complex I 23 kDa subunit family.</text>
</comment>
<accession>A4GYX0</accession>
<sequence length="176" mass="20528">MFPMVTGFMNYGQQTVRAARYIGQSFMTTLSHVNRLPVTIQYPYEKLITSERFRGRIHFEFDKCIACEVCVRVCPIDLPVVDWELETNIRKKRLLNYSIDFGICIFCGNCVEYCPTNCLSMTEEYELSTYNRHELNYNQIALGRLPMSVIDDYTIRTILNSPQSLIKMVKPPLIKD</sequence>
<evidence type="ECO:0000255" key="1">
    <source>
        <dbReference type="HAMAP-Rule" id="MF_01351"/>
    </source>
</evidence>
<name>NDHI_POPTR</name>
<dbReference type="EC" id="7.1.1.-" evidence="1"/>
<dbReference type="EMBL" id="EF489041">
    <property type="protein sequence ID" value="ABO36765.1"/>
    <property type="molecule type" value="Genomic_DNA"/>
</dbReference>
<dbReference type="RefSeq" id="YP_001109561.1">
    <property type="nucleotide sequence ID" value="NC_009143.1"/>
</dbReference>
<dbReference type="SMR" id="A4GYX0"/>
<dbReference type="FunCoup" id="A4GYX0">
    <property type="interactions" value="74"/>
</dbReference>
<dbReference type="STRING" id="3694.A4GYX0"/>
<dbReference type="GeneID" id="4929744"/>
<dbReference type="KEGG" id="pop:4929744"/>
<dbReference type="InParanoid" id="A4GYX0"/>
<dbReference type="OrthoDB" id="24758at2759"/>
<dbReference type="Proteomes" id="UP000006729">
    <property type="component" value="Chloroplast"/>
</dbReference>
<dbReference type="GO" id="GO:0009535">
    <property type="term" value="C:chloroplast thylakoid membrane"/>
    <property type="evidence" value="ECO:0007669"/>
    <property type="project" value="UniProtKB-SubCell"/>
</dbReference>
<dbReference type="GO" id="GO:0051539">
    <property type="term" value="F:4 iron, 4 sulfur cluster binding"/>
    <property type="evidence" value="ECO:0007669"/>
    <property type="project" value="UniProtKB-KW"/>
</dbReference>
<dbReference type="GO" id="GO:0005506">
    <property type="term" value="F:iron ion binding"/>
    <property type="evidence" value="ECO:0007669"/>
    <property type="project" value="UniProtKB-UniRule"/>
</dbReference>
<dbReference type="GO" id="GO:0008137">
    <property type="term" value="F:NADH dehydrogenase (ubiquinone) activity"/>
    <property type="evidence" value="ECO:0007669"/>
    <property type="project" value="InterPro"/>
</dbReference>
<dbReference type="GO" id="GO:0048038">
    <property type="term" value="F:quinone binding"/>
    <property type="evidence" value="ECO:0007669"/>
    <property type="project" value="UniProtKB-KW"/>
</dbReference>
<dbReference type="GO" id="GO:0019684">
    <property type="term" value="P:photosynthesis, light reaction"/>
    <property type="evidence" value="ECO:0007669"/>
    <property type="project" value="UniProtKB-UniRule"/>
</dbReference>
<dbReference type="FunFam" id="3.30.70.3270:FF:000006">
    <property type="entry name" value="NAD(P)H-quinone oxidoreductase subunit I, chloroplastic"/>
    <property type="match status" value="1"/>
</dbReference>
<dbReference type="Gene3D" id="3.30.70.3270">
    <property type="match status" value="1"/>
</dbReference>
<dbReference type="HAMAP" id="MF_01351">
    <property type="entry name" value="NDH1_NuoI"/>
    <property type="match status" value="1"/>
</dbReference>
<dbReference type="InterPro" id="IPR017896">
    <property type="entry name" value="4Fe4S_Fe-S-bd"/>
</dbReference>
<dbReference type="InterPro" id="IPR017900">
    <property type="entry name" value="4Fe4S_Fe_S_CS"/>
</dbReference>
<dbReference type="InterPro" id="IPR010226">
    <property type="entry name" value="NADH_quinone_OxRdtase_chainI"/>
</dbReference>
<dbReference type="InterPro" id="IPR004497">
    <property type="entry name" value="NDHI"/>
</dbReference>
<dbReference type="NCBIfam" id="TIGR00403">
    <property type="entry name" value="ndhI"/>
    <property type="match status" value="1"/>
</dbReference>
<dbReference type="NCBIfam" id="TIGR01971">
    <property type="entry name" value="NuoI"/>
    <property type="match status" value="1"/>
</dbReference>
<dbReference type="NCBIfam" id="NF004537">
    <property type="entry name" value="PRK05888.1-3"/>
    <property type="match status" value="1"/>
</dbReference>
<dbReference type="PANTHER" id="PTHR47275">
    <property type="entry name" value="NAD(P)H-QUINONE OXIDOREDUCTASE SUBUNIT I, CHLOROPLASTIC"/>
    <property type="match status" value="1"/>
</dbReference>
<dbReference type="PANTHER" id="PTHR47275:SF1">
    <property type="entry name" value="NAD(P)H-QUINONE OXIDOREDUCTASE SUBUNIT I, CHLOROPLASTIC"/>
    <property type="match status" value="1"/>
</dbReference>
<dbReference type="Pfam" id="PF13187">
    <property type="entry name" value="Fer4_9"/>
    <property type="match status" value="1"/>
</dbReference>
<dbReference type="SUPFAM" id="SSF54862">
    <property type="entry name" value="4Fe-4S ferredoxins"/>
    <property type="match status" value="1"/>
</dbReference>
<dbReference type="PROSITE" id="PS00198">
    <property type="entry name" value="4FE4S_FER_1"/>
    <property type="match status" value="2"/>
</dbReference>
<dbReference type="PROSITE" id="PS51379">
    <property type="entry name" value="4FE4S_FER_2"/>
    <property type="match status" value="2"/>
</dbReference>